<accession>A1VKN9</accession>
<organism>
    <name type="scientific">Polaromonas naphthalenivorans (strain CJ2)</name>
    <dbReference type="NCBI Taxonomy" id="365044"/>
    <lineage>
        <taxon>Bacteria</taxon>
        <taxon>Pseudomonadati</taxon>
        <taxon>Pseudomonadota</taxon>
        <taxon>Betaproteobacteria</taxon>
        <taxon>Burkholderiales</taxon>
        <taxon>Comamonadaceae</taxon>
        <taxon>Polaromonas</taxon>
    </lineage>
</organism>
<gene>
    <name evidence="1" type="primary">ispE</name>
    <name type="ordered locus">Pnap_0900</name>
</gene>
<reference key="1">
    <citation type="journal article" date="2009" name="Environ. Microbiol.">
        <title>The genome of Polaromonas naphthalenivorans strain CJ2, isolated from coal tar-contaminated sediment, reveals physiological and metabolic versatility and evolution through extensive horizontal gene transfer.</title>
        <authorList>
            <person name="Yagi J.M."/>
            <person name="Sims D."/>
            <person name="Brettin T."/>
            <person name="Bruce D."/>
            <person name="Madsen E.L."/>
        </authorList>
    </citation>
    <scope>NUCLEOTIDE SEQUENCE [LARGE SCALE GENOMIC DNA]</scope>
    <source>
        <strain>CJ2</strain>
    </source>
</reference>
<sequence length="297" mass="31974">MTRPIVSSRPLKALYDIPAPAKLNLFLHITGRRPDGYHLLQSVFMLIDWCDTLHFELRTDGQISRTDLNSPAQNNFEALPAEDLAVRAARALQAASGTPLGVHISLEKNIPSQAGMGGGSSDAASCLLALQRLWGVRLPSQDLRAIALSLGADVPFFLSGSHAWVEGIGEQITPITLPAARFVVLKPAAGVSTPDIFNAPDLKRDTKTATMLGFAAYADGPVFGFGHNDLQPVAQKLCPQISQSLDWLESQQLQGRMTGSGSAVFAQIFDDADLAAAPGNWIIRKCKNLQTHPLACW</sequence>
<keyword id="KW-0067">ATP-binding</keyword>
<keyword id="KW-0414">Isoprene biosynthesis</keyword>
<keyword id="KW-0418">Kinase</keyword>
<keyword id="KW-0547">Nucleotide-binding</keyword>
<keyword id="KW-1185">Reference proteome</keyword>
<keyword id="KW-0808">Transferase</keyword>
<name>ISPE_POLNA</name>
<evidence type="ECO:0000255" key="1">
    <source>
        <dbReference type="HAMAP-Rule" id="MF_00061"/>
    </source>
</evidence>
<feature type="chain" id="PRO_0000335738" description="4-diphosphocytidyl-2-C-methyl-D-erythritol kinase">
    <location>
        <begin position="1"/>
        <end position="297"/>
    </location>
</feature>
<feature type="active site" evidence="1">
    <location>
        <position position="22"/>
    </location>
</feature>
<feature type="active site" evidence="1">
    <location>
        <position position="153"/>
    </location>
</feature>
<feature type="binding site" evidence="1">
    <location>
        <begin position="111"/>
        <end position="121"/>
    </location>
    <ligand>
        <name>ATP</name>
        <dbReference type="ChEBI" id="CHEBI:30616"/>
    </ligand>
</feature>
<dbReference type="EC" id="2.7.1.148" evidence="1"/>
<dbReference type="EMBL" id="CP000529">
    <property type="protein sequence ID" value="ABM36217.1"/>
    <property type="molecule type" value="Genomic_DNA"/>
</dbReference>
<dbReference type="RefSeq" id="WP_011800311.1">
    <property type="nucleotide sequence ID" value="NC_008781.1"/>
</dbReference>
<dbReference type="SMR" id="A1VKN9"/>
<dbReference type="STRING" id="365044.Pnap_0900"/>
<dbReference type="KEGG" id="pna:Pnap_0900"/>
<dbReference type="eggNOG" id="COG1947">
    <property type="taxonomic scope" value="Bacteria"/>
</dbReference>
<dbReference type="HOGENOM" id="CLU_053057_3_0_4"/>
<dbReference type="OrthoDB" id="9809438at2"/>
<dbReference type="UniPathway" id="UPA00056">
    <property type="reaction ID" value="UER00094"/>
</dbReference>
<dbReference type="Proteomes" id="UP000000644">
    <property type="component" value="Chromosome"/>
</dbReference>
<dbReference type="GO" id="GO:0050515">
    <property type="term" value="F:4-(cytidine 5'-diphospho)-2-C-methyl-D-erythritol kinase activity"/>
    <property type="evidence" value="ECO:0007669"/>
    <property type="project" value="UniProtKB-UniRule"/>
</dbReference>
<dbReference type="GO" id="GO:0005524">
    <property type="term" value="F:ATP binding"/>
    <property type="evidence" value="ECO:0007669"/>
    <property type="project" value="UniProtKB-UniRule"/>
</dbReference>
<dbReference type="GO" id="GO:0019288">
    <property type="term" value="P:isopentenyl diphosphate biosynthetic process, methylerythritol 4-phosphate pathway"/>
    <property type="evidence" value="ECO:0007669"/>
    <property type="project" value="UniProtKB-UniRule"/>
</dbReference>
<dbReference type="GO" id="GO:0016114">
    <property type="term" value="P:terpenoid biosynthetic process"/>
    <property type="evidence" value="ECO:0007669"/>
    <property type="project" value="InterPro"/>
</dbReference>
<dbReference type="Gene3D" id="3.30.230.10">
    <property type="match status" value="1"/>
</dbReference>
<dbReference type="Gene3D" id="3.30.70.890">
    <property type="entry name" value="GHMP kinase, C-terminal domain"/>
    <property type="match status" value="1"/>
</dbReference>
<dbReference type="HAMAP" id="MF_00061">
    <property type="entry name" value="IspE"/>
    <property type="match status" value="1"/>
</dbReference>
<dbReference type="InterPro" id="IPR013750">
    <property type="entry name" value="GHMP_kinase_C_dom"/>
</dbReference>
<dbReference type="InterPro" id="IPR036554">
    <property type="entry name" value="GHMP_kinase_C_sf"/>
</dbReference>
<dbReference type="InterPro" id="IPR006204">
    <property type="entry name" value="GHMP_kinase_N_dom"/>
</dbReference>
<dbReference type="InterPro" id="IPR004424">
    <property type="entry name" value="IspE"/>
</dbReference>
<dbReference type="InterPro" id="IPR020568">
    <property type="entry name" value="Ribosomal_Su5_D2-typ_SF"/>
</dbReference>
<dbReference type="InterPro" id="IPR014721">
    <property type="entry name" value="Ribsml_uS5_D2-typ_fold_subgr"/>
</dbReference>
<dbReference type="NCBIfam" id="TIGR00154">
    <property type="entry name" value="ispE"/>
    <property type="match status" value="1"/>
</dbReference>
<dbReference type="PANTHER" id="PTHR43527">
    <property type="entry name" value="4-DIPHOSPHOCYTIDYL-2-C-METHYL-D-ERYTHRITOL KINASE, CHLOROPLASTIC"/>
    <property type="match status" value="1"/>
</dbReference>
<dbReference type="PANTHER" id="PTHR43527:SF2">
    <property type="entry name" value="4-DIPHOSPHOCYTIDYL-2-C-METHYL-D-ERYTHRITOL KINASE, CHLOROPLASTIC"/>
    <property type="match status" value="1"/>
</dbReference>
<dbReference type="Pfam" id="PF08544">
    <property type="entry name" value="GHMP_kinases_C"/>
    <property type="match status" value="1"/>
</dbReference>
<dbReference type="Pfam" id="PF00288">
    <property type="entry name" value="GHMP_kinases_N"/>
    <property type="match status" value="1"/>
</dbReference>
<dbReference type="PIRSF" id="PIRSF010376">
    <property type="entry name" value="IspE"/>
    <property type="match status" value="1"/>
</dbReference>
<dbReference type="SUPFAM" id="SSF55060">
    <property type="entry name" value="GHMP Kinase, C-terminal domain"/>
    <property type="match status" value="1"/>
</dbReference>
<dbReference type="SUPFAM" id="SSF54211">
    <property type="entry name" value="Ribosomal protein S5 domain 2-like"/>
    <property type="match status" value="1"/>
</dbReference>
<protein>
    <recommendedName>
        <fullName evidence="1">4-diphosphocytidyl-2-C-methyl-D-erythritol kinase</fullName>
        <shortName evidence="1">CMK</shortName>
        <ecNumber evidence="1">2.7.1.148</ecNumber>
    </recommendedName>
    <alternativeName>
        <fullName evidence="1">4-(cytidine-5'-diphospho)-2-C-methyl-D-erythritol kinase</fullName>
    </alternativeName>
</protein>
<proteinExistence type="inferred from homology"/>
<comment type="function">
    <text evidence="1">Catalyzes the phosphorylation of the position 2 hydroxy group of 4-diphosphocytidyl-2C-methyl-D-erythritol.</text>
</comment>
<comment type="catalytic activity">
    <reaction evidence="1">
        <text>4-CDP-2-C-methyl-D-erythritol + ATP = 4-CDP-2-C-methyl-D-erythritol 2-phosphate + ADP + H(+)</text>
        <dbReference type="Rhea" id="RHEA:18437"/>
        <dbReference type="ChEBI" id="CHEBI:15378"/>
        <dbReference type="ChEBI" id="CHEBI:30616"/>
        <dbReference type="ChEBI" id="CHEBI:57823"/>
        <dbReference type="ChEBI" id="CHEBI:57919"/>
        <dbReference type="ChEBI" id="CHEBI:456216"/>
        <dbReference type="EC" id="2.7.1.148"/>
    </reaction>
</comment>
<comment type="pathway">
    <text evidence="1">Isoprenoid biosynthesis; isopentenyl diphosphate biosynthesis via DXP pathway; isopentenyl diphosphate from 1-deoxy-D-xylulose 5-phosphate: step 3/6.</text>
</comment>
<comment type="similarity">
    <text evidence="1">Belongs to the GHMP kinase family. IspE subfamily.</text>
</comment>